<name>Y4399_BURP1</name>
<comment type="similarity">
    <text evidence="1">Belongs to the UPF0502 family.</text>
</comment>
<comment type="sequence caution" evidence="2">
    <conflict type="erroneous initiation">
        <sequence resource="EMBL-CDS" id="ABA51202"/>
    </conflict>
</comment>
<dbReference type="EMBL" id="CP000125">
    <property type="protein sequence ID" value="ABA51202.1"/>
    <property type="status" value="ALT_INIT"/>
    <property type="molecule type" value="Genomic_DNA"/>
</dbReference>
<dbReference type="RefSeq" id="WP_004528683.1">
    <property type="nucleotide sequence ID" value="NC_007435.1"/>
</dbReference>
<dbReference type="SMR" id="Q3JLJ5"/>
<dbReference type="EnsemblBacteria" id="ABA51202">
    <property type="protein sequence ID" value="ABA51202"/>
    <property type="gene ID" value="BURPS1710b_A0399"/>
</dbReference>
<dbReference type="KEGG" id="bpm:BURPS1710b_A0399"/>
<dbReference type="HOGENOM" id="CLU_057831_0_0_4"/>
<dbReference type="Proteomes" id="UP000002700">
    <property type="component" value="Chromosome II"/>
</dbReference>
<dbReference type="Gene3D" id="1.10.10.10">
    <property type="entry name" value="Winged helix-like DNA-binding domain superfamily/Winged helix DNA-binding domain"/>
    <property type="match status" value="2"/>
</dbReference>
<dbReference type="HAMAP" id="MF_01584">
    <property type="entry name" value="UPF0502"/>
    <property type="match status" value="1"/>
</dbReference>
<dbReference type="InterPro" id="IPR007432">
    <property type="entry name" value="DUF480"/>
</dbReference>
<dbReference type="InterPro" id="IPR036388">
    <property type="entry name" value="WH-like_DNA-bd_sf"/>
</dbReference>
<dbReference type="InterPro" id="IPR036390">
    <property type="entry name" value="WH_DNA-bd_sf"/>
</dbReference>
<dbReference type="PANTHER" id="PTHR38768">
    <property type="entry name" value="UPF0502 PROTEIN YCEH"/>
    <property type="match status" value="1"/>
</dbReference>
<dbReference type="PANTHER" id="PTHR38768:SF1">
    <property type="entry name" value="UPF0502 PROTEIN YCEH"/>
    <property type="match status" value="1"/>
</dbReference>
<dbReference type="Pfam" id="PF04337">
    <property type="entry name" value="DUF480"/>
    <property type="match status" value="1"/>
</dbReference>
<dbReference type="SUPFAM" id="SSF46785">
    <property type="entry name" value="Winged helix' DNA-binding domain"/>
    <property type="match status" value="2"/>
</dbReference>
<gene>
    <name type="ordered locus">BURPS1710b_A0399</name>
</gene>
<organism>
    <name type="scientific">Burkholderia pseudomallei (strain 1710b)</name>
    <dbReference type="NCBI Taxonomy" id="320372"/>
    <lineage>
        <taxon>Bacteria</taxon>
        <taxon>Pseudomonadati</taxon>
        <taxon>Pseudomonadota</taxon>
        <taxon>Betaproteobacteria</taxon>
        <taxon>Burkholderiales</taxon>
        <taxon>Burkholderiaceae</taxon>
        <taxon>Burkholderia</taxon>
        <taxon>pseudomallei group</taxon>
    </lineage>
</organism>
<accession>Q3JLJ5</accession>
<sequence length="234" mass="25239">MNSTPDTFQRPALRELTPLEARVLGVLIEKQHTVPDTYPLSLNALTAGCNQKTARSPVMNVSEAEVLTAIDGLKRLSLASEGSSSRVPRFEHNMNRVLGIPSQAAALLTMLLLRGPQTAAELRLNSARLHGFADISSVEAFLDELAARTPPLVVKLPRAPGARESRWMHLMCGDVAPDEAPAHGAHEDAVPPSEFEALKAEQKALTAELAQLRALVEYMANELGIDVGKLTRGV</sequence>
<reference key="1">
    <citation type="journal article" date="2010" name="Genome Biol. Evol.">
        <title>Continuing evolution of Burkholderia mallei through genome reduction and large-scale rearrangements.</title>
        <authorList>
            <person name="Losada L."/>
            <person name="Ronning C.M."/>
            <person name="DeShazer D."/>
            <person name="Woods D."/>
            <person name="Fedorova N."/>
            <person name="Kim H.S."/>
            <person name="Shabalina S.A."/>
            <person name="Pearson T.R."/>
            <person name="Brinkac L."/>
            <person name="Tan P."/>
            <person name="Nandi T."/>
            <person name="Crabtree J."/>
            <person name="Badger J."/>
            <person name="Beckstrom-Sternberg S."/>
            <person name="Saqib M."/>
            <person name="Schutzer S.E."/>
            <person name="Keim P."/>
            <person name="Nierman W.C."/>
        </authorList>
    </citation>
    <scope>NUCLEOTIDE SEQUENCE [LARGE SCALE GENOMIC DNA]</scope>
    <source>
        <strain>1710b</strain>
    </source>
</reference>
<evidence type="ECO:0000255" key="1">
    <source>
        <dbReference type="HAMAP-Rule" id="MF_01584"/>
    </source>
</evidence>
<evidence type="ECO:0000305" key="2"/>
<protein>
    <recommendedName>
        <fullName evidence="1">UPF0502 protein BURPS1710b_A0399</fullName>
    </recommendedName>
</protein>
<proteinExistence type="inferred from homology"/>
<feature type="chain" id="PRO_0000309377" description="UPF0502 protein BURPS1710b_A0399">
    <location>
        <begin position="1"/>
        <end position="234"/>
    </location>
</feature>